<proteinExistence type="inferred from homology"/>
<name>LIGB_PSEPK</name>
<protein>
    <recommendedName>
        <fullName evidence="1">DNA ligase B</fullName>
        <ecNumber evidence="1">6.5.1.2</ecNumber>
    </recommendedName>
    <alternativeName>
        <fullName evidence="1">Polydeoxyribonucleotide synthase [NAD(+)] B</fullName>
    </alternativeName>
</protein>
<reference key="1">
    <citation type="journal article" date="2002" name="Environ. Microbiol.">
        <title>Complete genome sequence and comparative analysis of the metabolically versatile Pseudomonas putida KT2440.</title>
        <authorList>
            <person name="Nelson K.E."/>
            <person name="Weinel C."/>
            <person name="Paulsen I.T."/>
            <person name="Dodson R.J."/>
            <person name="Hilbert H."/>
            <person name="Martins dos Santos V.A.P."/>
            <person name="Fouts D.E."/>
            <person name="Gill S.R."/>
            <person name="Pop M."/>
            <person name="Holmes M."/>
            <person name="Brinkac L.M."/>
            <person name="Beanan M.J."/>
            <person name="DeBoy R.T."/>
            <person name="Daugherty S.C."/>
            <person name="Kolonay J.F."/>
            <person name="Madupu R."/>
            <person name="Nelson W.C."/>
            <person name="White O."/>
            <person name="Peterson J.D."/>
            <person name="Khouri H.M."/>
            <person name="Hance I."/>
            <person name="Chris Lee P."/>
            <person name="Holtzapple E.K."/>
            <person name="Scanlan D."/>
            <person name="Tran K."/>
            <person name="Moazzez A."/>
            <person name="Utterback T.R."/>
            <person name="Rizzo M."/>
            <person name="Lee K."/>
            <person name="Kosack D."/>
            <person name="Moestl D."/>
            <person name="Wedler H."/>
            <person name="Lauber J."/>
            <person name="Stjepandic D."/>
            <person name="Hoheisel J."/>
            <person name="Straetz M."/>
            <person name="Heim S."/>
            <person name="Kiewitz C."/>
            <person name="Eisen J.A."/>
            <person name="Timmis K.N."/>
            <person name="Duesterhoeft A."/>
            <person name="Tuemmler B."/>
            <person name="Fraser C.M."/>
        </authorList>
    </citation>
    <scope>NUCLEOTIDE SEQUENCE [LARGE SCALE GENOMIC DNA]</scope>
    <source>
        <strain>ATCC 47054 / DSM 6125 / CFBP 8728 / NCIMB 11950 / KT2440</strain>
    </source>
</reference>
<gene>
    <name evidence="1" type="primary">ligB</name>
    <name type="ordered locus">PP_4968</name>
</gene>
<keyword id="KW-0227">DNA damage</keyword>
<keyword id="KW-0234">DNA repair</keyword>
<keyword id="KW-0235">DNA replication</keyword>
<keyword id="KW-0436">Ligase</keyword>
<keyword id="KW-0520">NAD</keyword>
<keyword id="KW-1185">Reference proteome</keyword>
<organism>
    <name type="scientific">Pseudomonas putida (strain ATCC 47054 / DSM 6125 / CFBP 8728 / NCIMB 11950 / KT2440)</name>
    <dbReference type="NCBI Taxonomy" id="160488"/>
    <lineage>
        <taxon>Bacteria</taxon>
        <taxon>Pseudomonadati</taxon>
        <taxon>Pseudomonadota</taxon>
        <taxon>Gammaproteobacteria</taxon>
        <taxon>Pseudomonadales</taxon>
        <taxon>Pseudomonadaceae</taxon>
        <taxon>Pseudomonas</taxon>
    </lineage>
</organism>
<dbReference type="EC" id="6.5.1.2" evidence="1"/>
<dbReference type="EMBL" id="AE015451">
    <property type="protein sequence ID" value="AAN70535.1"/>
    <property type="molecule type" value="Genomic_DNA"/>
</dbReference>
<dbReference type="RefSeq" id="NP_747071.1">
    <property type="nucleotide sequence ID" value="NC_002947.4"/>
</dbReference>
<dbReference type="RefSeq" id="WP_010955540.1">
    <property type="nucleotide sequence ID" value="NZ_CP169744.1"/>
</dbReference>
<dbReference type="SMR" id="Q88D59"/>
<dbReference type="STRING" id="160488.PP_4968"/>
<dbReference type="PaxDb" id="160488-PP_4968"/>
<dbReference type="GeneID" id="83682702"/>
<dbReference type="KEGG" id="ppu:PP_4968"/>
<dbReference type="PATRIC" id="fig|160488.4.peg.5305"/>
<dbReference type="eggNOG" id="COG0272">
    <property type="taxonomic scope" value="Bacteria"/>
</dbReference>
<dbReference type="HOGENOM" id="CLU_489786_0_0_6"/>
<dbReference type="OrthoDB" id="9759736at2"/>
<dbReference type="PhylomeDB" id="Q88D59"/>
<dbReference type="BioCyc" id="PPUT160488:G1G01-5312-MONOMER"/>
<dbReference type="Proteomes" id="UP000000556">
    <property type="component" value="Chromosome"/>
</dbReference>
<dbReference type="GO" id="GO:0003911">
    <property type="term" value="F:DNA ligase (NAD+) activity"/>
    <property type="evidence" value="ECO:0007669"/>
    <property type="project" value="UniProtKB-UniRule"/>
</dbReference>
<dbReference type="GO" id="GO:0006281">
    <property type="term" value="P:DNA repair"/>
    <property type="evidence" value="ECO:0007669"/>
    <property type="project" value="UniProtKB-KW"/>
</dbReference>
<dbReference type="GO" id="GO:0006260">
    <property type="term" value="P:DNA replication"/>
    <property type="evidence" value="ECO:0007669"/>
    <property type="project" value="UniProtKB-KW"/>
</dbReference>
<dbReference type="Gene3D" id="1.10.150.20">
    <property type="entry name" value="5' to 3' exonuclease, C-terminal subdomain"/>
    <property type="match status" value="2"/>
</dbReference>
<dbReference type="Gene3D" id="3.30.470.30">
    <property type="entry name" value="DNA ligase/mRNA capping enzyme"/>
    <property type="match status" value="1"/>
</dbReference>
<dbReference type="Gene3D" id="1.10.287.610">
    <property type="entry name" value="Helix hairpin bin"/>
    <property type="match status" value="1"/>
</dbReference>
<dbReference type="Gene3D" id="2.40.50.140">
    <property type="entry name" value="Nucleic acid-binding proteins"/>
    <property type="match status" value="1"/>
</dbReference>
<dbReference type="HAMAP" id="MF_01587">
    <property type="entry name" value="DNA_ligase_B"/>
    <property type="match status" value="1"/>
</dbReference>
<dbReference type="InterPro" id="IPR001679">
    <property type="entry name" value="DNA_ligase"/>
</dbReference>
<dbReference type="InterPro" id="IPR020923">
    <property type="entry name" value="DNA_ligase_B"/>
</dbReference>
<dbReference type="InterPro" id="IPR033136">
    <property type="entry name" value="DNA_ligase_CS"/>
</dbReference>
<dbReference type="InterPro" id="IPR013839">
    <property type="entry name" value="DNAligase_adenylation"/>
</dbReference>
<dbReference type="InterPro" id="IPR013840">
    <property type="entry name" value="DNAligase_N"/>
</dbReference>
<dbReference type="InterPro" id="IPR012340">
    <property type="entry name" value="NA-bd_OB-fold"/>
</dbReference>
<dbReference type="InterPro" id="IPR050326">
    <property type="entry name" value="NAD_dep_DNA_ligaseB"/>
</dbReference>
<dbReference type="InterPro" id="IPR004150">
    <property type="entry name" value="NAD_DNA_ligase_OB"/>
</dbReference>
<dbReference type="InterPro" id="IPR010994">
    <property type="entry name" value="RuvA_2-like"/>
</dbReference>
<dbReference type="NCBIfam" id="NF005987">
    <property type="entry name" value="PRK08097.1"/>
    <property type="match status" value="1"/>
</dbReference>
<dbReference type="PANTHER" id="PTHR47810">
    <property type="entry name" value="DNA LIGASE"/>
    <property type="match status" value="1"/>
</dbReference>
<dbReference type="PANTHER" id="PTHR47810:SF1">
    <property type="entry name" value="DNA LIGASE B"/>
    <property type="match status" value="1"/>
</dbReference>
<dbReference type="Pfam" id="PF01653">
    <property type="entry name" value="DNA_ligase_aden"/>
    <property type="match status" value="1"/>
</dbReference>
<dbReference type="Pfam" id="PF03120">
    <property type="entry name" value="DNA_ligase_OB"/>
    <property type="match status" value="1"/>
</dbReference>
<dbReference type="PIRSF" id="PIRSF001604">
    <property type="entry name" value="LigA"/>
    <property type="match status" value="1"/>
</dbReference>
<dbReference type="SMART" id="SM00532">
    <property type="entry name" value="LIGANc"/>
    <property type="match status" value="1"/>
</dbReference>
<dbReference type="SUPFAM" id="SSF56091">
    <property type="entry name" value="DNA ligase/mRNA capping enzyme, catalytic domain"/>
    <property type="match status" value="1"/>
</dbReference>
<dbReference type="SUPFAM" id="SSF50249">
    <property type="entry name" value="Nucleic acid-binding proteins"/>
    <property type="match status" value="1"/>
</dbReference>
<dbReference type="SUPFAM" id="SSF47781">
    <property type="entry name" value="RuvA domain 2-like"/>
    <property type="match status" value="1"/>
</dbReference>
<dbReference type="PROSITE" id="PS01056">
    <property type="entry name" value="DNA_LIGASE_N2"/>
    <property type="match status" value="1"/>
</dbReference>
<accession>Q88D59</accession>
<sequence length="566" mass="62721">MPYLLLFALLFVLNTPLARAASCPHWNPQQAKAEVAQLRATLARWDEHYHRQGIALVADELYDQSHERLNHLQQCFAVGTSPSPLASARGPVPHPVPHTGVDKLADRQAVARWMTGKTGVWVQPKVDGVAVSLTYQQGRLVQLTSRGDGVHGHDWSRHIPQLGAVTRQLPEAVDLHLQGELYLRLDEHVQAKAGSANARGTVAGLLARKQLTGAQGNAIGLFVWGWPHGPEQQAERLAQLARLGFPDSQLYSIAIDTLEDAAHWREHWYRSALPFATDGVILRQGSRPPAERWQAKAPYWIAAWKYPYAQALAEVRDVRFRVGRTGRVTPVLHVQPVTLDDRRITQVSLGSLARWQRLDIRPGDQVAISLAGLTIPRLEHVVHRAVERQPITAPAPDQHHAHSCWQASEGCDEQFIARLTWLGGKQGLALPRTGPGTWRRLVEAGLVTSMTDWLQLDAERLQQAPGISRLTATQMLGSFDQARSRPFDQWLRALGVPIGKHLPLTGNWQALASRSAGQWQTVPGIGAKRSRQLVEFFAASEVQAIAAQLAEAGIEGFRTPPQRIEQ</sequence>
<comment type="function">
    <text evidence="1">Catalyzes the formation of phosphodiester linkages between 5'-phosphoryl and 3'-hydroxyl groups in double-stranded DNA using NAD as a coenzyme and as the energy source for the reaction.</text>
</comment>
<comment type="catalytic activity">
    <reaction evidence="1">
        <text>NAD(+) + (deoxyribonucleotide)n-3'-hydroxyl + 5'-phospho-(deoxyribonucleotide)m = (deoxyribonucleotide)n+m + AMP + beta-nicotinamide D-nucleotide.</text>
        <dbReference type="EC" id="6.5.1.2"/>
    </reaction>
</comment>
<comment type="similarity">
    <text evidence="1">Belongs to the NAD-dependent DNA ligase family. LigB subfamily.</text>
</comment>
<evidence type="ECO:0000255" key="1">
    <source>
        <dbReference type="HAMAP-Rule" id="MF_01587"/>
    </source>
</evidence>
<feature type="chain" id="PRO_0000313547" description="DNA ligase B">
    <location>
        <begin position="1"/>
        <end position="566"/>
    </location>
</feature>
<feature type="active site" description="N6-AMP-lysine intermediate" evidence="1">
    <location>
        <position position="125"/>
    </location>
</feature>